<keyword id="KW-1185">Reference proteome</keyword>
<keyword id="KW-0687">Ribonucleoprotein</keyword>
<keyword id="KW-0689">Ribosomal protein</keyword>
<name>RL32_FLAPJ</name>
<proteinExistence type="inferred from homology"/>
<protein>
    <recommendedName>
        <fullName evidence="1">Large ribosomal subunit protein bL32</fullName>
    </recommendedName>
    <alternativeName>
        <fullName evidence="2">50S ribosomal protein L32</fullName>
    </alternativeName>
</protein>
<gene>
    <name evidence="1" type="primary">rpmF</name>
    <name type="ordered locus">FP2380</name>
</gene>
<dbReference type="EMBL" id="AM398681">
    <property type="protein sequence ID" value="CAL44435.1"/>
    <property type="molecule type" value="Genomic_DNA"/>
</dbReference>
<dbReference type="RefSeq" id="WP_011964469.1">
    <property type="nucleotide sequence ID" value="NC_009613.3"/>
</dbReference>
<dbReference type="RefSeq" id="YP_001297236.1">
    <property type="nucleotide sequence ID" value="NC_009613.3"/>
</dbReference>
<dbReference type="SMR" id="A6H261"/>
<dbReference type="STRING" id="402612.FP2380"/>
<dbReference type="EnsemblBacteria" id="CAL44435">
    <property type="protein sequence ID" value="CAL44435"/>
    <property type="gene ID" value="FP2380"/>
</dbReference>
<dbReference type="GeneID" id="66553488"/>
<dbReference type="KEGG" id="fps:FP2380"/>
<dbReference type="PATRIC" id="fig|402612.5.peg.2437"/>
<dbReference type="eggNOG" id="COG0333">
    <property type="taxonomic scope" value="Bacteria"/>
</dbReference>
<dbReference type="HOGENOM" id="CLU_129084_2_3_10"/>
<dbReference type="OrthoDB" id="9812874at2"/>
<dbReference type="Proteomes" id="UP000006394">
    <property type="component" value="Chromosome"/>
</dbReference>
<dbReference type="GO" id="GO:0015934">
    <property type="term" value="C:large ribosomal subunit"/>
    <property type="evidence" value="ECO:0007669"/>
    <property type="project" value="InterPro"/>
</dbReference>
<dbReference type="GO" id="GO:0003735">
    <property type="term" value="F:structural constituent of ribosome"/>
    <property type="evidence" value="ECO:0007669"/>
    <property type="project" value="InterPro"/>
</dbReference>
<dbReference type="GO" id="GO:0006412">
    <property type="term" value="P:translation"/>
    <property type="evidence" value="ECO:0007669"/>
    <property type="project" value="UniProtKB-UniRule"/>
</dbReference>
<dbReference type="HAMAP" id="MF_00340">
    <property type="entry name" value="Ribosomal_bL32"/>
    <property type="match status" value="1"/>
</dbReference>
<dbReference type="InterPro" id="IPR002677">
    <property type="entry name" value="Ribosomal_bL32"/>
</dbReference>
<dbReference type="InterPro" id="IPR044957">
    <property type="entry name" value="Ribosomal_bL32_bact"/>
</dbReference>
<dbReference type="InterPro" id="IPR011332">
    <property type="entry name" value="Ribosomal_zn-bd"/>
</dbReference>
<dbReference type="NCBIfam" id="TIGR01031">
    <property type="entry name" value="rpmF_bact"/>
    <property type="match status" value="1"/>
</dbReference>
<dbReference type="PANTHER" id="PTHR35534">
    <property type="entry name" value="50S RIBOSOMAL PROTEIN L32"/>
    <property type="match status" value="1"/>
</dbReference>
<dbReference type="PANTHER" id="PTHR35534:SF1">
    <property type="entry name" value="LARGE RIBOSOMAL SUBUNIT PROTEIN BL32"/>
    <property type="match status" value="1"/>
</dbReference>
<dbReference type="Pfam" id="PF01783">
    <property type="entry name" value="Ribosomal_L32p"/>
    <property type="match status" value="1"/>
</dbReference>
<dbReference type="SUPFAM" id="SSF57829">
    <property type="entry name" value="Zn-binding ribosomal proteins"/>
    <property type="match status" value="1"/>
</dbReference>
<organism>
    <name type="scientific">Flavobacterium psychrophilum (strain ATCC 49511 / DSM 21280 / CIP 103535 / JIP02/86)</name>
    <dbReference type="NCBI Taxonomy" id="402612"/>
    <lineage>
        <taxon>Bacteria</taxon>
        <taxon>Pseudomonadati</taxon>
        <taxon>Bacteroidota</taxon>
        <taxon>Flavobacteriia</taxon>
        <taxon>Flavobacteriales</taxon>
        <taxon>Flavobacteriaceae</taxon>
        <taxon>Flavobacterium</taxon>
    </lineage>
</organism>
<sequence length="64" mass="7525">MAHPKRKISKTRRDKRRTHYKATVAQIATCPITGEAHLYHRAYWHEGKMYYRGQVVIDKQTAVA</sequence>
<accession>A6H261</accession>
<feature type="chain" id="PRO_1000005058" description="Large ribosomal subunit protein bL32">
    <location>
        <begin position="1"/>
        <end position="64"/>
    </location>
</feature>
<reference key="1">
    <citation type="journal article" date="2007" name="Nat. Biotechnol.">
        <title>Complete genome sequence of the fish pathogen Flavobacterium psychrophilum.</title>
        <authorList>
            <person name="Duchaud E."/>
            <person name="Boussaha M."/>
            <person name="Loux V."/>
            <person name="Bernardet J.-F."/>
            <person name="Michel C."/>
            <person name="Kerouault B."/>
            <person name="Mondot S."/>
            <person name="Nicolas P."/>
            <person name="Bossy R."/>
            <person name="Caron C."/>
            <person name="Bessieres P."/>
            <person name="Gibrat J.-F."/>
            <person name="Claverol S."/>
            <person name="Dumetz F."/>
            <person name="Le Henaff M."/>
            <person name="Benmansour A."/>
        </authorList>
    </citation>
    <scope>NUCLEOTIDE SEQUENCE [LARGE SCALE GENOMIC DNA]</scope>
    <source>
        <strain>ATCC 49511 / DSM 21280 / CIP 103535 / JIP02/86</strain>
    </source>
</reference>
<evidence type="ECO:0000255" key="1">
    <source>
        <dbReference type="HAMAP-Rule" id="MF_00340"/>
    </source>
</evidence>
<evidence type="ECO:0000305" key="2"/>
<comment type="similarity">
    <text evidence="1">Belongs to the bacterial ribosomal protein bL32 family.</text>
</comment>